<protein>
    <recommendedName>
        <fullName>UPF0337 protein SERP0494</fullName>
    </recommendedName>
</protein>
<organism>
    <name type="scientific">Staphylococcus epidermidis (strain ATCC 35984 / DSM 28319 / BCRC 17069 / CCUG 31568 / BM 3577 / RP62A)</name>
    <dbReference type="NCBI Taxonomy" id="176279"/>
    <lineage>
        <taxon>Bacteria</taxon>
        <taxon>Bacillati</taxon>
        <taxon>Bacillota</taxon>
        <taxon>Bacilli</taxon>
        <taxon>Bacillales</taxon>
        <taxon>Staphylococcaceae</taxon>
        <taxon>Staphylococcus</taxon>
    </lineage>
</organism>
<accession>Q5HQQ4</accession>
<proteinExistence type="inferred from homology"/>
<gene>
    <name type="ordered locus">SERP0494</name>
</gene>
<reference key="1">
    <citation type="journal article" date="2005" name="J. Bacteriol.">
        <title>Insights on evolution of virulence and resistance from the complete genome analysis of an early methicillin-resistant Staphylococcus aureus strain and a biofilm-producing methicillin-resistant Staphylococcus epidermidis strain.</title>
        <authorList>
            <person name="Gill S.R."/>
            <person name="Fouts D.E."/>
            <person name="Archer G.L."/>
            <person name="Mongodin E.F."/>
            <person name="DeBoy R.T."/>
            <person name="Ravel J."/>
            <person name="Paulsen I.T."/>
            <person name="Kolonay J.F."/>
            <person name="Brinkac L.M."/>
            <person name="Beanan M.J."/>
            <person name="Dodson R.J."/>
            <person name="Daugherty S.C."/>
            <person name="Madupu R."/>
            <person name="Angiuoli S.V."/>
            <person name="Durkin A.S."/>
            <person name="Haft D.H."/>
            <person name="Vamathevan J.J."/>
            <person name="Khouri H."/>
            <person name="Utterback T.R."/>
            <person name="Lee C."/>
            <person name="Dimitrov G."/>
            <person name="Jiang L."/>
            <person name="Qin H."/>
            <person name="Weidman J."/>
            <person name="Tran K."/>
            <person name="Kang K.H."/>
            <person name="Hance I.R."/>
            <person name="Nelson K.E."/>
            <person name="Fraser C.M."/>
        </authorList>
    </citation>
    <scope>NUCLEOTIDE SEQUENCE [LARGE SCALE GENOMIC DNA]</scope>
    <source>
        <strain>ATCC 35984 / DSM 28319 / BCRC 17069 / CCUG 31568 / BM 3577 / RP62A</strain>
    </source>
</reference>
<comment type="similarity">
    <text evidence="2">Belongs to the UPF0337 (CsbD) family.</text>
</comment>
<keyword id="KW-1185">Reference proteome</keyword>
<dbReference type="EMBL" id="CP000029">
    <property type="protein sequence ID" value="AAW53861.1"/>
    <property type="molecule type" value="Genomic_DNA"/>
</dbReference>
<dbReference type="RefSeq" id="WP_001831967.1">
    <property type="nucleotide sequence ID" value="NC_002976.3"/>
</dbReference>
<dbReference type="SMR" id="Q5HQQ4"/>
<dbReference type="STRING" id="176279.SERP0494"/>
<dbReference type="KEGG" id="ser:SERP0494"/>
<dbReference type="eggNOG" id="COG3237">
    <property type="taxonomic scope" value="Bacteria"/>
</dbReference>
<dbReference type="HOGENOM" id="CLU_135567_0_3_9"/>
<dbReference type="Proteomes" id="UP000000531">
    <property type="component" value="Chromosome"/>
</dbReference>
<dbReference type="Gene3D" id="1.10.1470.10">
    <property type="entry name" value="YjbJ"/>
    <property type="match status" value="1"/>
</dbReference>
<dbReference type="InterPro" id="IPR008462">
    <property type="entry name" value="CsbD"/>
</dbReference>
<dbReference type="InterPro" id="IPR036629">
    <property type="entry name" value="YjbJ_sf"/>
</dbReference>
<dbReference type="Pfam" id="PF05532">
    <property type="entry name" value="CsbD"/>
    <property type="match status" value="1"/>
</dbReference>
<dbReference type="SUPFAM" id="SSF69047">
    <property type="entry name" value="Hypothetical protein YjbJ"/>
    <property type="match status" value="1"/>
</dbReference>
<evidence type="ECO:0000256" key="1">
    <source>
        <dbReference type="SAM" id="MobiDB-lite"/>
    </source>
</evidence>
<evidence type="ECO:0000305" key="2"/>
<name>Y494_STAEQ</name>
<feature type="chain" id="PRO_0000210039" description="UPF0337 protein SERP0494">
    <location>
        <begin position="1"/>
        <end position="63"/>
    </location>
</feature>
<feature type="region of interest" description="Disordered" evidence="1">
    <location>
        <begin position="1"/>
        <end position="46"/>
    </location>
</feature>
<feature type="compositionally biased region" description="Basic and acidic residues" evidence="1">
    <location>
        <begin position="22"/>
        <end position="46"/>
    </location>
</feature>
<sequence>MAEDKFEQAKGNIKETVGNATDNKELEKDGKGDKASGKAKEAVENVKEKANDVIDKFKGNKGD</sequence>